<dbReference type="EMBL" id="JX311702">
    <property type="protein sequence ID" value="AFR60585.1"/>
    <property type="molecule type" value="mRNA"/>
</dbReference>
<dbReference type="GO" id="GO:0005576">
    <property type="term" value="C:extracellular region"/>
    <property type="evidence" value="ECO:0007669"/>
    <property type="project" value="UniProtKB-SubCell"/>
</dbReference>
<dbReference type="GO" id="GO:0016020">
    <property type="term" value="C:membrane"/>
    <property type="evidence" value="ECO:0007669"/>
    <property type="project" value="UniProtKB-KW"/>
</dbReference>
<dbReference type="GO" id="GO:0044218">
    <property type="term" value="C:other organism cell membrane"/>
    <property type="evidence" value="ECO:0007669"/>
    <property type="project" value="UniProtKB-KW"/>
</dbReference>
<dbReference type="GO" id="GO:0042742">
    <property type="term" value="P:defense response to bacterium"/>
    <property type="evidence" value="ECO:0007669"/>
    <property type="project" value="UniProtKB-KW"/>
</dbReference>
<dbReference type="GO" id="GO:0050832">
    <property type="term" value="P:defense response to fungus"/>
    <property type="evidence" value="ECO:0007669"/>
    <property type="project" value="UniProtKB-KW"/>
</dbReference>
<dbReference type="GO" id="GO:0031640">
    <property type="term" value="P:killing of cells of another organism"/>
    <property type="evidence" value="ECO:0007669"/>
    <property type="project" value="UniProtKB-KW"/>
</dbReference>
<keyword id="KW-0027">Amidation</keyword>
<keyword id="KW-0044">Antibiotic</keyword>
<keyword id="KW-0929">Antimicrobial</keyword>
<keyword id="KW-0165">Cleavage on pair of basic residues</keyword>
<keyword id="KW-0204">Cytolysis</keyword>
<keyword id="KW-0295">Fungicide</keyword>
<keyword id="KW-0472">Membrane</keyword>
<keyword id="KW-0964">Secreted</keyword>
<keyword id="KW-0732">Signal</keyword>
<keyword id="KW-1052">Target cell membrane</keyword>
<keyword id="KW-1053">Target membrane</keyword>
<protein>
    <recommendedName>
        <fullName evidence="4">Antimicrobial peptide HsAp2</fullName>
    </recommendedName>
</protein>
<proteinExistence type="evidence at protein level"/>
<reference key="1">
    <citation type="journal article" date="2012" name="Peptides">
        <title>A novel class of antimicrobial peptides from the scorpion Heterometrus spinifer.</title>
        <authorList>
            <person name="Nie Y."/>
            <person name="Zeng X.C."/>
            <person name="Yang Y."/>
            <person name="Luo F."/>
            <person name="Luo X."/>
            <person name="Wu S."/>
            <person name="Zhang L."/>
            <person name="Zhou J."/>
        </authorList>
    </citation>
    <scope>NUCLEOTIDE SEQUENCE [GENOMIC DNA / MRNA]</scope>
    <scope>AMIDATION AT PRO-65</scope>
    <source>
        <tissue>Venom gland</tissue>
    </source>
</reference>
<name>NDB32_HETSP</name>
<sequence length="74" mass="8453">MSRRLILILVLVAMLVKTMAGMESKWVETTYEIKKRSGTSEKERESERLLGVVNPLIKCFRSPCPGRRAISEQT</sequence>
<feature type="signal peptide" evidence="3">
    <location>
        <begin position="1"/>
        <end position="21"/>
    </location>
</feature>
<feature type="propeptide" id="PRO_0000429194" evidence="1">
    <location>
        <begin position="22"/>
        <end position="33"/>
    </location>
</feature>
<feature type="peptide" id="PRO_0000429195" description="Antimicrobial peptide HsAp2">
    <location>
        <begin position="37"/>
        <end position="65"/>
    </location>
</feature>
<feature type="propeptide" id="PRO_0000429196" evidence="1">
    <location>
        <begin position="69"/>
        <end position="74"/>
    </location>
</feature>
<feature type="modified residue" description="Proline amide" evidence="6">
    <location>
        <position position="65"/>
    </location>
</feature>
<accession>P0DMI8</accession>
<accession>A0A096VHN7</accession>
<organism>
    <name type="scientific">Heterometrus spinifer</name>
    <name type="common">Asia giant forest scorpion</name>
    <name type="synonym">Malaysian black scorpion</name>
    <dbReference type="NCBI Taxonomy" id="118530"/>
    <lineage>
        <taxon>Eukaryota</taxon>
        <taxon>Metazoa</taxon>
        <taxon>Ecdysozoa</taxon>
        <taxon>Arthropoda</taxon>
        <taxon>Chelicerata</taxon>
        <taxon>Arachnida</taxon>
        <taxon>Scorpiones</taxon>
        <taxon>Iurida</taxon>
        <taxon>Scorpionoidea</taxon>
        <taxon>Scorpionidae</taxon>
        <taxon>Heterometrinae</taxon>
        <taxon>Heterometrus</taxon>
    </lineage>
</organism>
<evidence type="ECO:0000250" key="1"/>
<evidence type="ECO:0000250" key="2">
    <source>
        <dbReference type="UniProtKB" id="P0DMI7"/>
    </source>
</evidence>
<evidence type="ECO:0000255" key="3"/>
<evidence type="ECO:0000303" key="4">
    <source>
    </source>
</evidence>
<evidence type="ECO:0000305" key="5"/>
<evidence type="ECO:0000305" key="6">
    <source>
    </source>
</evidence>
<comment type="function">
    <text evidence="2">Possesses antimicrobial activity against both Gram-negative and Gram-positive bacteria, as well as against the fungus C.tropicalis. Also possesses a relatively high hemolytic activity. May act by disrupting the integrity of the bacterial cell membrane.</text>
</comment>
<comment type="subcellular location">
    <subcellularLocation>
        <location evidence="6">Secreted</location>
    </subcellularLocation>
    <subcellularLocation>
        <location evidence="5">Target cell membrane</location>
    </subcellularLocation>
</comment>
<comment type="tissue specificity">
    <text evidence="6">Expressed by the venom gland.</text>
</comment>
<comment type="similarity">
    <text evidence="5">Belongs to the non-disulfide-bridged peptide (NDBP) superfamily. Medium-length antimicrobial peptide (group 3) family.</text>
</comment>